<sequence length="233" mass="26577">MQDSKEQRVHGVFEKIYKNYDQMNSVISFQQHKKWRDKTMRIMNVKEGAKALDVCCGTADWTIALAKAAGKSGEIKGLDFSENMLSVGEQKVKDGGFSQIELLHGNAMELPFDDDTFDYVTIGFGLRNVPDYLTVLKEMRRVVKPGGQVVCLETSQPEMFGFRQAYFMYFKYIMPFFGKLFAKSYKEYSWLQESARDFPGMKELAGLFEEAGLKNVKYHSFTGGVAATHIGWK</sequence>
<gene>
    <name evidence="1" type="primary">menG</name>
    <name type="synonym">gerC2</name>
    <name type="synonym">gerCB</name>
    <name type="synonym">menH</name>
    <name type="ordered locus">BSU22750</name>
</gene>
<organism>
    <name type="scientific">Bacillus subtilis (strain 168)</name>
    <dbReference type="NCBI Taxonomy" id="224308"/>
    <lineage>
        <taxon>Bacteria</taxon>
        <taxon>Bacillati</taxon>
        <taxon>Bacillota</taxon>
        <taxon>Bacilli</taxon>
        <taxon>Bacillales</taxon>
        <taxon>Bacillaceae</taxon>
        <taxon>Bacillus</taxon>
    </lineage>
</organism>
<accession>P31113</accession>
<reference key="1">
    <citation type="submission" date="1992-01" db="EMBL/GenBank/DDBJ databases">
        <title>Sequence of Bacillus subtilis dbpA, mtr(A,B), gerC(1-3), ndk, cheR, aro(B,E,F,H), trp(A-F), hisH, and tyrA genes.</title>
        <authorList>
            <person name="Henner D.J."/>
        </authorList>
    </citation>
    <scope>NUCLEOTIDE SEQUENCE [GENOMIC DNA]</scope>
    <source>
        <strain>168</strain>
    </source>
</reference>
<reference key="2">
    <citation type="journal article" date="1997" name="Nature">
        <title>The complete genome sequence of the Gram-positive bacterium Bacillus subtilis.</title>
        <authorList>
            <person name="Kunst F."/>
            <person name="Ogasawara N."/>
            <person name="Moszer I."/>
            <person name="Albertini A.M."/>
            <person name="Alloni G."/>
            <person name="Azevedo V."/>
            <person name="Bertero M.G."/>
            <person name="Bessieres P."/>
            <person name="Bolotin A."/>
            <person name="Borchert S."/>
            <person name="Borriss R."/>
            <person name="Boursier L."/>
            <person name="Brans A."/>
            <person name="Braun M."/>
            <person name="Brignell S.C."/>
            <person name="Bron S."/>
            <person name="Brouillet S."/>
            <person name="Bruschi C.V."/>
            <person name="Caldwell B."/>
            <person name="Capuano V."/>
            <person name="Carter N.M."/>
            <person name="Choi S.-K."/>
            <person name="Codani J.-J."/>
            <person name="Connerton I.F."/>
            <person name="Cummings N.J."/>
            <person name="Daniel R.A."/>
            <person name="Denizot F."/>
            <person name="Devine K.M."/>
            <person name="Duesterhoeft A."/>
            <person name="Ehrlich S.D."/>
            <person name="Emmerson P.T."/>
            <person name="Entian K.-D."/>
            <person name="Errington J."/>
            <person name="Fabret C."/>
            <person name="Ferrari E."/>
            <person name="Foulger D."/>
            <person name="Fritz C."/>
            <person name="Fujita M."/>
            <person name="Fujita Y."/>
            <person name="Fuma S."/>
            <person name="Galizzi A."/>
            <person name="Galleron N."/>
            <person name="Ghim S.-Y."/>
            <person name="Glaser P."/>
            <person name="Goffeau A."/>
            <person name="Golightly E.J."/>
            <person name="Grandi G."/>
            <person name="Guiseppi G."/>
            <person name="Guy B.J."/>
            <person name="Haga K."/>
            <person name="Haiech J."/>
            <person name="Harwood C.R."/>
            <person name="Henaut A."/>
            <person name="Hilbert H."/>
            <person name="Holsappel S."/>
            <person name="Hosono S."/>
            <person name="Hullo M.-F."/>
            <person name="Itaya M."/>
            <person name="Jones L.-M."/>
            <person name="Joris B."/>
            <person name="Karamata D."/>
            <person name="Kasahara Y."/>
            <person name="Klaerr-Blanchard M."/>
            <person name="Klein C."/>
            <person name="Kobayashi Y."/>
            <person name="Koetter P."/>
            <person name="Koningstein G."/>
            <person name="Krogh S."/>
            <person name="Kumano M."/>
            <person name="Kurita K."/>
            <person name="Lapidus A."/>
            <person name="Lardinois S."/>
            <person name="Lauber J."/>
            <person name="Lazarevic V."/>
            <person name="Lee S.-M."/>
            <person name="Levine A."/>
            <person name="Liu H."/>
            <person name="Masuda S."/>
            <person name="Mauel C."/>
            <person name="Medigue C."/>
            <person name="Medina N."/>
            <person name="Mellado R.P."/>
            <person name="Mizuno M."/>
            <person name="Moestl D."/>
            <person name="Nakai S."/>
            <person name="Noback M."/>
            <person name="Noone D."/>
            <person name="O'Reilly M."/>
            <person name="Ogawa K."/>
            <person name="Ogiwara A."/>
            <person name="Oudega B."/>
            <person name="Park S.-H."/>
            <person name="Parro V."/>
            <person name="Pohl T.M."/>
            <person name="Portetelle D."/>
            <person name="Porwollik S."/>
            <person name="Prescott A.M."/>
            <person name="Presecan E."/>
            <person name="Pujic P."/>
            <person name="Purnelle B."/>
            <person name="Rapoport G."/>
            <person name="Rey M."/>
            <person name="Reynolds S."/>
            <person name="Rieger M."/>
            <person name="Rivolta C."/>
            <person name="Rocha E."/>
            <person name="Roche B."/>
            <person name="Rose M."/>
            <person name="Sadaie Y."/>
            <person name="Sato T."/>
            <person name="Scanlan E."/>
            <person name="Schleich S."/>
            <person name="Schroeter R."/>
            <person name="Scoffone F."/>
            <person name="Sekiguchi J."/>
            <person name="Sekowska A."/>
            <person name="Seror S.J."/>
            <person name="Serror P."/>
            <person name="Shin B.-S."/>
            <person name="Soldo B."/>
            <person name="Sorokin A."/>
            <person name="Tacconi E."/>
            <person name="Takagi T."/>
            <person name="Takahashi H."/>
            <person name="Takemaru K."/>
            <person name="Takeuchi M."/>
            <person name="Tamakoshi A."/>
            <person name="Tanaka T."/>
            <person name="Terpstra P."/>
            <person name="Tognoni A."/>
            <person name="Tosato V."/>
            <person name="Uchiyama S."/>
            <person name="Vandenbol M."/>
            <person name="Vannier F."/>
            <person name="Vassarotti A."/>
            <person name="Viari A."/>
            <person name="Wambutt R."/>
            <person name="Wedler E."/>
            <person name="Wedler H."/>
            <person name="Weitzenegger T."/>
            <person name="Winters P."/>
            <person name="Wipat A."/>
            <person name="Yamamoto H."/>
            <person name="Yamane K."/>
            <person name="Yasumoto K."/>
            <person name="Yata K."/>
            <person name="Yoshida K."/>
            <person name="Yoshikawa H.-F."/>
            <person name="Zumstein E."/>
            <person name="Yoshikawa H."/>
            <person name="Danchin A."/>
        </authorList>
    </citation>
    <scope>NUCLEOTIDE SEQUENCE [LARGE SCALE GENOMIC DNA]</scope>
    <source>
        <strain>168</strain>
    </source>
</reference>
<reference key="3">
    <citation type="journal article" date="1990" name="J. Gen. Microbiol.">
        <title>Characterization and cloning of the gerC locus of Bacillus subtilis 168.</title>
        <authorList>
            <person name="Yazdi M.A."/>
            <person name="Moir A."/>
        </authorList>
    </citation>
    <scope>CHARACTERIZATION OF GERC LOCUS</scope>
</reference>
<reference key="4">
    <citation type="journal article" date="1998" name="Microbiology">
        <title>The gerC locus of Bacillus subtilis, required for menaquinone biosynthesis, is concerned only indirectly with spore germination.</title>
        <authorList>
            <person name="Leatherbarrow A.J.H."/>
            <person name="Yazdi M.A."/>
            <person name="Curson J.P."/>
            <person name="Moir A."/>
        </authorList>
    </citation>
    <scope>FUNCTION IN THE MENAQUINONE BIOSYNTHESIS</scope>
    <scope>NOMENCLATURE</scope>
</reference>
<feature type="chain" id="PRO_0000193247" description="Demethylmenaquinone methyltransferase">
    <location>
        <begin position="1"/>
        <end position="233"/>
    </location>
</feature>
<feature type="binding site" evidence="1">
    <location>
        <position position="58"/>
    </location>
    <ligand>
        <name>S-adenosyl-L-methionine</name>
        <dbReference type="ChEBI" id="CHEBI:59789"/>
    </ligand>
</feature>
<feature type="binding site" evidence="1">
    <location>
        <position position="79"/>
    </location>
    <ligand>
        <name>S-adenosyl-L-methionine</name>
        <dbReference type="ChEBI" id="CHEBI:59789"/>
    </ligand>
</feature>
<feature type="binding site" evidence="1">
    <location>
        <begin position="106"/>
        <end position="107"/>
    </location>
    <ligand>
        <name>S-adenosyl-L-methionine</name>
        <dbReference type="ChEBI" id="CHEBI:59789"/>
    </ligand>
</feature>
<protein>
    <recommendedName>
        <fullName evidence="1">Demethylmenaquinone methyltransferase</fullName>
        <ecNumber evidence="1">2.1.1.163</ecNumber>
    </recommendedName>
</protein>
<keyword id="KW-0474">Menaquinone biosynthesis</keyword>
<keyword id="KW-0489">Methyltransferase</keyword>
<keyword id="KW-1185">Reference proteome</keyword>
<keyword id="KW-0949">S-adenosyl-L-methionine</keyword>
<keyword id="KW-0808">Transferase</keyword>
<dbReference type="EC" id="2.1.1.163" evidence="1"/>
<dbReference type="EMBL" id="M80245">
    <property type="protein sequence ID" value="AAA20855.1"/>
    <property type="molecule type" value="Genomic_DNA"/>
</dbReference>
<dbReference type="EMBL" id="AL009126">
    <property type="protein sequence ID" value="CAB14191.1"/>
    <property type="molecule type" value="Genomic_DNA"/>
</dbReference>
<dbReference type="PIR" id="D69630">
    <property type="entry name" value="D69630"/>
</dbReference>
<dbReference type="RefSeq" id="NP_390156.1">
    <property type="nucleotide sequence ID" value="NC_000964.3"/>
</dbReference>
<dbReference type="RefSeq" id="WP_003230580.1">
    <property type="nucleotide sequence ID" value="NZ_OZ025638.1"/>
</dbReference>
<dbReference type="SMR" id="P31113"/>
<dbReference type="FunCoup" id="P31113">
    <property type="interactions" value="797"/>
</dbReference>
<dbReference type="STRING" id="224308.BSU22750"/>
<dbReference type="ChEMBL" id="CHEMBL1075049"/>
<dbReference type="PaxDb" id="224308-BSU22750"/>
<dbReference type="EnsemblBacteria" id="CAB14191">
    <property type="protein sequence ID" value="CAB14191"/>
    <property type="gene ID" value="BSU_22750"/>
</dbReference>
<dbReference type="GeneID" id="938999"/>
<dbReference type="KEGG" id="bsu:BSU22750"/>
<dbReference type="eggNOG" id="COG2226">
    <property type="taxonomic scope" value="Bacteria"/>
</dbReference>
<dbReference type="InParanoid" id="P31113"/>
<dbReference type="OrthoDB" id="9808140at2"/>
<dbReference type="PhylomeDB" id="P31113"/>
<dbReference type="BioCyc" id="BSUB:BSU22750-MONOMER"/>
<dbReference type="UniPathway" id="UPA00079">
    <property type="reaction ID" value="UER00169"/>
</dbReference>
<dbReference type="Proteomes" id="UP000001570">
    <property type="component" value="Chromosome"/>
</dbReference>
<dbReference type="GO" id="GO:0043770">
    <property type="term" value="F:demethylmenaquinone methyltransferase activity"/>
    <property type="evidence" value="ECO:0007669"/>
    <property type="project" value="UniProtKB-UniRule"/>
</dbReference>
<dbReference type="GO" id="GO:0008168">
    <property type="term" value="F:methyltransferase activity"/>
    <property type="evidence" value="ECO:0000318"/>
    <property type="project" value="GO_Central"/>
</dbReference>
<dbReference type="GO" id="GO:0009234">
    <property type="term" value="P:menaquinone biosynthetic process"/>
    <property type="evidence" value="ECO:0007669"/>
    <property type="project" value="UniProtKB-UniRule"/>
</dbReference>
<dbReference type="GO" id="GO:0032259">
    <property type="term" value="P:methylation"/>
    <property type="evidence" value="ECO:0007669"/>
    <property type="project" value="UniProtKB-KW"/>
</dbReference>
<dbReference type="CDD" id="cd02440">
    <property type="entry name" value="AdoMet_MTases"/>
    <property type="match status" value="1"/>
</dbReference>
<dbReference type="FunFam" id="3.40.50.150:FF:000086">
    <property type="entry name" value="Demethylmenaquinone methyltransferase"/>
    <property type="match status" value="1"/>
</dbReference>
<dbReference type="Gene3D" id="3.40.50.150">
    <property type="entry name" value="Vaccinia Virus protein VP39"/>
    <property type="match status" value="1"/>
</dbReference>
<dbReference type="HAMAP" id="MF_01813">
    <property type="entry name" value="MenG_UbiE_methyltr"/>
    <property type="match status" value="1"/>
</dbReference>
<dbReference type="InterPro" id="IPR014122">
    <property type="entry name" value="MenG_heptapren"/>
</dbReference>
<dbReference type="InterPro" id="IPR029063">
    <property type="entry name" value="SAM-dependent_MTases_sf"/>
</dbReference>
<dbReference type="InterPro" id="IPR004033">
    <property type="entry name" value="UbiE/COQ5_MeTrFase"/>
</dbReference>
<dbReference type="InterPro" id="IPR023576">
    <property type="entry name" value="UbiE/COQ5_MeTrFase_CS"/>
</dbReference>
<dbReference type="NCBIfam" id="TIGR02752">
    <property type="entry name" value="MenG_heptapren"/>
    <property type="match status" value="1"/>
</dbReference>
<dbReference type="NCBIfam" id="TIGR01934">
    <property type="entry name" value="MenG_MenH_UbiE"/>
    <property type="match status" value="1"/>
</dbReference>
<dbReference type="NCBIfam" id="NF001243">
    <property type="entry name" value="PRK00216.1-4"/>
    <property type="match status" value="1"/>
</dbReference>
<dbReference type="NCBIfam" id="NF001244">
    <property type="entry name" value="PRK00216.1-5"/>
    <property type="match status" value="1"/>
</dbReference>
<dbReference type="PANTHER" id="PTHR43591:SF24">
    <property type="entry name" value="2-METHOXY-6-POLYPRENYL-1,4-BENZOQUINOL METHYLASE, MITOCHONDRIAL"/>
    <property type="match status" value="1"/>
</dbReference>
<dbReference type="PANTHER" id="PTHR43591">
    <property type="entry name" value="METHYLTRANSFERASE"/>
    <property type="match status" value="1"/>
</dbReference>
<dbReference type="Pfam" id="PF01209">
    <property type="entry name" value="Ubie_methyltran"/>
    <property type="match status" value="1"/>
</dbReference>
<dbReference type="SUPFAM" id="SSF53335">
    <property type="entry name" value="S-adenosyl-L-methionine-dependent methyltransferases"/>
    <property type="match status" value="1"/>
</dbReference>
<dbReference type="PROSITE" id="PS51608">
    <property type="entry name" value="SAM_MT_UBIE"/>
    <property type="match status" value="1"/>
</dbReference>
<dbReference type="PROSITE" id="PS01183">
    <property type="entry name" value="UBIE_1"/>
    <property type="match status" value="1"/>
</dbReference>
<dbReference type="PROSITE" id="PS01184">
    <property type="entry name" value="UBIE_2"/>
    <property type="match status" value="1"/>
</dbReference>
<evidence type="ECO:0000255" key="1">
    <source>
        <dbReference type="HAMAP-Rule" id="MF_01813"/>
    </source>
</evidence>
<evidence type="ECO:0000269" key="2">
    <source>
    </source>
</evidence>
<comment type="function">
    <text evidence="1 2">Methyltransferase required for the conversion of demethylmenaquinol (DMKH2) to menaquinol (MKH2).</text>
</comment>
<comment type="catalytic activity">
    <reaction evidence="1">
        <text>a 2-demethylmenaquinol + S-adenosyl-L-methionine = a menaquinol + S-adenosyl-L-homocysteine + H(+)</text>
        <dbReference type="Rhea" id="RHEA:42640"/>
        <dbReference type="Rhea" id="RHEA-COMP:9539"/>
        <dbReference type="Rhea" id="RHEA-COMP:9563"/>
        <dbReference type="ChEBI" id="CHEBI:15378"/>
        <dbReference type="ChEBI" id="CHEBI:18151"/>
        <dbReference type="ChEBI" id="CHEBI:55437"/>
        <dbReference type="ChEBI" id="CHEBI:57856"/>
        <dbReference type="ChEBI" id="CHEBI:59789"/>
        <dbReference type="EC" id="2.1.1.163"/>
    </reaction>
</comment>
<comment type="pathway">
    <text evidence="1">Quinol/quinone metabolism; menaquinone biosynthesis; menaquinol from 1,4-dihydroxy-2-naphthoate: step 2/2.</text>
</comment>
<comment type="similarity">
    <text evidence="1">Belongs to the class I-like SAM-binding methyltransferase superfamily. MenG/UbiE family.</text>
</comment>
<name>MENG_BACSU</name>
<proteinExistence type="evidence at protein level"/>